<feature type="chain" id="PRO_0000367089" description="Actin, cytoplasmic 1">
    <location>
        <begin position="1"/>
        <end position="375"/>
    </location>
</feature>
<feature type="initiator methionine" description="Removed; alternate" evidence="2">
    <location>
        <position position="1"/>
    </location>
</feature>
<feature type="chain" id="PRO_0000000799" description="Actin, cytoplasmic 1, N-terminally processed">
    <location>
        <begin position="2"/>
        <end position="375"/>
    </location>
</feature>
<feature type="modified residue" description="N-acetylmethionine; in Actin, cytoplasmic 1; alternate" evidence="2">
    <location>
        <position position="1"/>
    </location>
</feature>
<feature type="modified residue" description="N-acetylaspartate; in Actin, cytoplasmic 1, N-terminally processed" evidence="2">
    <location>
        <position position="2"/>
    </location>
</feature>
<feature type="modified residue" description="Methionine (R)-sulfoxide" evidence="4">
    <location>
        <position position="44"/>
    </location>
</feature>
<feature type="modified residue" description="Methionine (R)-sulfoxide" evidence="4">
    <location>
        <position position="47"/>
    </location>
</feature>
<feature type="modified residue" description="Tele-methylhistidine" evidence="4">
    <location>
        <position position="73"/>
    </location>
</feature>
<keyword id="KW-0007">Acetylation</keyword>
<keyword id="KW-0067">ATP-binding</keyword>
<keyword id="KW-0963">Cytoplasm</keyword>
<keyword id="KW-0206">Cytoskeleton</keyword>
<keyword id="KW-0378">Hydrolase</keyword>
<keyword id="KW-0488">Methylation</keyword>
<keyword id="KW-0547">Nucleotide-binding</keyword>
<keyword id="KW-0539">Nucleus</keyword>
<keyword id="KW-0558">Oxidation</keyword>
<evidence type="ECO:0000250" key="1">
    <source>
        <dbReference type="UniProtKB" id="O93400"/>
    </source>
</evidence>
<evidence type="ECO:0000250" key="2">
    <source>
        <dbReference type="UniProtKB" id="P60706"/>
    </source>
</evidence>
<evidence type="ECO:0000250" key="3">
    <source>
        <dbReference type="UniProtKB" id="P60709"/>
    </source>
</evidence>
<evidence type="ECO:0000250" key="4">
    <source>
        <dbReference type="UniProtKB" id="P60710"/>
    </source>
</evidence>
<evidence type="ECO:0000250" key="5">
    <source>
        <dbReference type="UniProtKB" id="P68137"/>
    </source>
</evidence>
<evidence type="ECO:0000305" key="6"/>
<proteinExistence type="inferred from homology"/>
<accession>P83751</accession>
<accession>O73815</accession>
<accession>P12714</accession>
<protein>
    <recommendedName>
        <fullName>Actin, cytoplasmic 1</fullName>
        <ecNumber evidence="5">3.6.4.-</ecNumber>
    </recommendedName>
    <alternativeName>
        <fullName>Beta-actin</fullName>
    </alternativeName>
    <component>
        <recommendedName>
            <fullName>Actin, cytoplasmic 1, N-terminally processed</fullName>
        </recommendedName>
    </component>
</protein>
<sequence>MDDEIAALVVDNGSGMCKAGFAGDDAPRAVFPSIVGRPRHQGVMVGMGQKDSYVGDEAQSKRGILTLKYPIEHGIVTNWDDMEKIWHHTFYNELRVAPEEHPVLLTEAPLNPKANREKMTQIMFETFNTPAMYVAIQAVLSLYASGRTTGIVMDSGDGVTHTVPIYEGYALPHAILRLDLAGRDLTDYLMKILTERGYSFTTTAEREIVRDIKEKLCYVALDFEQEMGTAASSSSLEKSYELPDGQVITIGNERFRCPEALFQPSFLGMESCGIHETTFNSIMKCDVDIRKDLYANTVLSGGTTMYPGIADRMQKEITSLAPSTMKIKIIAPPERKYSVWIGGSILASLSTFQQMWISKQEYDESGPSIVHRKCF</sequence>
<organism>
    <name type="scientific">Ctenopharyngodon idella</name>
    <name type="common">Grass carp</name>
    <name type="synonym">Leuciscus idella</name>
    <dbReference type="NCBI Taxonomy" id="7959"/>
    <lineage>
        <taxon>Eukaryota</taxon>
        <taxon>Metazoa</taxon>
        <taxon>Chordata</taxon>
        <taxon>Craniata</taxon>
        <taxon>Vertebrata</taxon>
        <taxon>Euteleostomi</taxon>
        <taxon>Actinopterygii</taxon>
        <taxon>Neopterygii</taxon>
        <taxon>Teleostei</taxon>
        <taxon>Ostariophysi</taxon>
        <taxon>Cypriniformes</taxon>
        <taxon>Xenocyprididae</taxon>
        <taxon>Xenocypridinae</taxon>
        <taxon>Ctenopharyngodon</taxon>
    </lineage>
</organism>
<comment type="function">
    <text evidence="3">Actin is a highly conserved protein that polymerizes to produce filaments that form cross-linked networks in the cytoplasm of cells. Actin exists in both monomeric (G-actin) and polymeric (F-actin) forms, both forms playing key functions, such as cell motility and contraction. In addition to their role in the cytoplasmic cytoskeleton, G- and F-actin also localize in the nucleus, and regulate gene transcription and motility and repair of damaged DNA.</text>
</comment>
<comment type="catalytic activity">
    <reaction evidence="5">
        <text>ATP + H2O = ADP + phosphate + H(+)</text>
        <dbReference type="Rhea" id="RHEA:13065"/>
        <dbReference type="ChEBI" id="CHEBI:15377"/>
        <dbReference type="ChEBI" id="CHEBI:15378"/>
        <dbReference type="ChEBI" id="CHEBI:30616"/>
        <dbReference type="ChEBI" id="CHEBI:43474"/>
        <dbReference type="ChEBI" id="CHEBI:456216"/>
    </reaction>
</comment>
<comment type="subunit">
    <text evidence="3 4">Polymerization of globular actin (G-actin) leads to a structural filament (F-actin) in the form of a two-stranded helix (By similarity). Each actin can bind to 4 others (By similarity).</text>
</comment>
<comment type="subcellular location">
    <subcellularLocation>
        <location evidence="4">Cytoplasm</location>
        <location evidence="4">Cytoskeleton</location>
    </subcellularLocation>
    <subcellularLocation>
        <location evidence="1">Nucleus</location>
    </subcellularLocation>
</comment>
<comment type="PTM">
    <molecule>Actin, cytoplasmic 1</molecule>
    <text evidence="3">N-terminal cleavage of acetylated methionine of immature cytoplasmic actin by ACTMAP.</text>
</comment>
<comment type="PTM">
    <text evidence="4">Oxidation of Met-44 and Met-47 by MICALs (mical1, mical2 or mical3) to form methionine sulfoxide promotes actin filament depolymerization. Mical1 and mical2 produce the (R)-S-oxide form. The (R)-S-oxide form is reverted by msrb1 and msrb2, which promote actin repolymerization.</text>
</comment>
<comment type="PTM">
    <text evidence="2">Methylation at His-73 by SETD3. Methylation stabilizes actin filaments.</text>
</comment>
<comment type="miscellaneous">
    <text evidence="1">In vertebrates 3 main groups of actin isoforms, alpha, beta and gamma have been identified. The alpha actins are found in muscle tissues and are a major constituent of the contractile apparatus. The beta and gamma actins coexist in most cell types as components of the cytoskeleton and as mediators of internal cell motility.</text>
</comment>
<comment type="similarity">
    <text evidence="6">Belongs to the actin family.</text>
</comment>
<name>ACTB_CTEID</name>
<reference key="1">
    <citation type="journal article" date="1989" name="Nucleic Acids Res.">
        <title>The beta-actin gene of carp (Ctenopharyngodon idella).</title>
        <authorList>
            <person name="Liu Z.J."/>
            <person name="Zhu Z.Y."/>
            <person name="Roberg K."/>
            <person name="Faras A.F."/>
            <person name="Guise K.S."/>
            <person name="Kapuscinski A.R."/>
            <person name="Hackett P.B."/>
        </authorList>
    </citation>
    <scope>NUCLEOTIDE SEQUENCE [GENOMIC DNA]</scope>
</reference>
<dbReference type="EC" id="3.6.4.-" evidence="5"/>
<dbReference type="EMBL" id="M25013">
    <property type="protein sequence ID" value="AAA49197.1"/>
    <property type="molecule type" value="Genomic_DNA"/>
</dbReference>
<dbReference type="PIR" id="S05430">
    <property type="entry name" value="S05430"/>
</dbReference>
<dbReference type="SMR" id="P83751"/>
<dbReference type="OrthoDB" id="6953074at2759"/>
<dbReference type="GO" id="GO:0015629">
    <property type="term" value="C:actin cytoskeleton"/>
    <property type="evidence" value="ECO:0000250"/>
    <property type="project" value="UniProtKB"/>
</dbReference>
<dbReference type="GO" id="GO:0005856">
    <property type="term" value="C:cytoskeleton"/>
    <property type="evidence" value="ECO:0000250"/>
    <property type="project" value="AgBase"/>
</dbReference>
<dbReference type="GO" id="GO:0097433">
    <property type="term" value="C:dense body"/>
    <property type="evidence" value="ECO:0000250"/>
    <property type="project" value="AgBase"/>
</dbReference>
<dbReference type="GO" id="GO:0005925">
    <property type="term" value="C:focal adhesion"/>
    <property type="evidence" value="ECO:0000250"/>
    <property type="project" value="AgBase"/>
</dbReference>
<dbReference type="GO" id="GO:0005634">
    <property type="term" value="C:nucleus"/>
    <property type="evidence" value="ECO:0000250"/>
    <property type="project" value="UniProtKB"/>
</dbReference>
<dbReference type="GO" id="GO:0005886">
    <property type="term" value="C:plasma membrane"/>
    <property type="evidence" value="ECO:0000250"/>
    <property type="project" value="AgBase"/>
</dbReference>
<dbReference type="GO" id="GO:0005524">
    <property type="term" value="F:ATP binding"/>
    <property type="evidence" value="ECO:0007669"/>
    <property type="project" value="UniProtKB-KW"/>
</dbReference>
<dbReference type="GO" id="GO:0016787">
    <property type="term" value="F:hydrolase activity"/>
    <property type="evidence" value="ECO:0007669"/>
    <property type="project" value="UniProtKB-KW"/>
</dbReference>
<dbReference type="CDD" id="cd10224">
    <property type="entry name" value="ASKHA_NBD_actin"/>
    <property type="match status" value="1"/>
</dbReference>
<dbReference type="FunFam" id="3.30.420.40:FF:000131">
    <property type="entry name" value="Actin, alpha skeletal muscle"/>
    <property type="match status" value="1"/>
</dbReference>
<dbReference type="FunFam" id="3.30.420.40:FF:000291">
    <property type="entry name" value="Actin, alpha skeletal muscle"/>
    <property type="match status" value="1"/>
</dbReference>
<dbReference type="FunFam" id="3.90.640.10:FF:000047">
    <property type="entry name" value="Actin, alpha skeletal muscle"/>
    <property type="match status" value="1"/>
</dbReference>
<dbReference type="FunFam" id="3.30.420.40:FF:000058">
    <property type="entry name" value="Putative actin-related protein 5"/>
    <property type="match status" value="1"/>
</dbReference>
<dbReference type="Gene3D" id="3.30.420.40">
    <property type="match status" value="2"/>
</dbReference>
<dbReference type="Gene3D" id="3.90.640.10">
    <property type="entry name" value="Actin, Chain A, domain 4"/>
    <property type="match status" value="1"/>
</dbReference>
<dbReference type="InterPro" id="IPR004000">
    <property type="entry name" value="Actin"/>
</dbReference>
<dbReference type="InterPro" id="IPR020902">
    <property type="entry name" value="Actin/actin-like_CS"/>
</dbReference>
<dbReference type="InterPro" id="IPR004001">
    <property type="entry name" value="Actin_CS"/>
</dbReference>
<dbReference type="InterPro" id="IPR043129">
    <property type="entry name" value="ATPase_NBD"/>
</dbReference>
<dbReference type="PANTHER" id="PTHR11937">
    <property type="entry name" value="ACTIN"/>
    <property type="match status" value="1"/>
</dbReference>
<dbReference type="Pfam" id="PF00022">
    <property type="entry name" value="Actin"/>
    <property type="match status" value="1"/>
</dbReference>
<dbReference type="PRINTS" id="PR00190">
    <property type="entry name" value="ACTIN"/>
</dbReference>
<dbReference type="SMART" id="SM00268">
    <property type="entry name" value="ACTIN"/>
    <property type="match status" value="1"/>
</dbReference>
<dbReference type="SUPFAM" id="SSF53067">
    <property type="entry name" value="Actin-like ATPase domain"/>
    <property type="match status" value="2"/>
</dbReference>
<dbReference type="PROSITE" id="PS00406">
    <property type="entry name" value="ACTINS_1"/>
    <property type="match status" value="1"/>
</dbReference>
<dbReference type="PROSITE" id="PS00432">
    <property type="entry name" value="ACTINS_2"/>
    <property type="match status" value="1"/>
</dbReference>
<dbReference type="PROSITE" id="PS01132">
    <property type="entry name" value="ACTINS_ACT_LIKE"/>
    <property type="match status" value="1"/>
</dbReference>
<gene>
    <name type="primary">actb</name>
</gene>